<feature type="signal peptide" evidence="7">
    <location>
        <begin position="1"/>
        <end position="16"/>
    </location>
</feature>
<feature type="chain" id="PRO_0000018656" description="Dipeptidase 1">
    <location>
        <begin position="17"/>
        <end position="384"/>
    </location>
</feature>
<feature type="propeptide" id="PRO_0000018657" description="Removed in mature form" evidence="1">
    <location>
        <begin position="385"/>
        <end position="409"/>
    </location>
</feature>
<feature type="binding site" evidence="5">
    <location>
        <position position="36"/>
    </location>
    <ligand>
        <name>Zn(2+)</name>
        <dbReference type="ChEBI" id="CHEBI:29105"/>
        <label>1</label>
        <note>catalytic</note>
    </ligand>
</feature>
<feature type="binding site" evidence="5">
    <location>
        <position position="38"/>
    </location>
    <ligand>
        <name>Zn(2+)</name>
        <dbReference type="ChEBI" id="CHEBI:29105"/>
        <label>1</label>
        <note>catalytic</note>
    </ligand>
</feature>
<feature type="binding site" evidence="5">
    <location>
        <position position="141"/>
    </location>
    <ligand>
        <name>Zn(2+)</name>
        <dbReference type="ChEBI" id="CHEBI:29105"/>
        <label>1</label>
        <note>catalytic</note>
    </ligand>
</feature>
<feature type="binding site" evidence="5">
    <location>
        <position position="141"/>
    </location>
    <ligand>
        <name>Zn(2+)</name>
        <dbReference type="ChEBI" id="CHEBI:29105"/>
        <label>2</label>
        <note>catalytic</note>
    </ligand>
</feature>
<feature type="binding site" evidence="5">
    <location>
        <position position="168"/>
    </location>
    <ligand>
        <name>substrate</name>
    </ligand>
</feature>
<feature type="binding site" evidence="5">
    <location>
        <position position="214"/>
    </location>
    <ligand>
        <name>Zn(2+)</name>
        <dbReference type="ChEBI" id="CHEBI:29105"/>
        <label>2</label>
        <note>catalytic</note>
    </ligand>
</feature>
<feature type="binding site" evidence="5">
    <location>
        <position position="235"/>
    </location>
    <ligand>
        <name>Zn(2+)</name>
        <dbReference type="ChEBI" id="CHEBI:29105"/>
        <label>2</label>
        <note>catalytic</note>
    </ligand>
</feature>
<feature type="binding site" evidence="5">
    <location>
        <position position="246"/>
    </location>
    <ligand>
        <name>substrate</name>
    </ligand>
</feature>
<feature type="binding site" evidence="5">
    <location>
        <position position="304"/>
    </location>
    <ligand>
        <name>substrate</name>
    </ligand>
</feature>
<feature type="lipid moiety-binding region" description="GPI-anchor amidated serine" evidence="6">
    <location>
        <position position="384"/>
    </location>
</feature>
<feature type="glycosylation site" description="N-linked (GlcNAc...) asparagine" evidence="8">
    <location>
        <position position="57"/>
    </location>
</feature>
<feature type="glycosylation site" description="N-linked (GlcNAc...) asparagine" evidence="4">
    <location>
        <position position="279"/>
    </location>
</feature>
<feature type="disulfide bond" evidence="5">
    <location>
        <begin position="87"/>
        <end position="170"/>
    </location>
</feature>
<feature type="disulfide bond" evidence="5">
    <location>
        <begin position="242"/>
        <end position="274"/>
    </location>
</feature>
<feature type="disulfide bond" description="Interchain" evidence="10">
    <location>
        <position position="377"/>
    </location>
</feature>
<feature type="mutagenesis site" description="Does not affect dimerization. Does not affect dipeptidase activity." evidence="10">
    <original>C</original>
    <variation>G</variation>
    <location>
        <position position="87"/>
    </location>
</feature>
<feature type="mutagenesis site" description="Does not affect dimerization. Does not affect dipeptidase activity." evidence="10">
    <original>C</original>
    <variation>A</variation>
    <location>
        <position position="109"/>
    </location>
</feature>
<feature type="mutagenesis site" description="Does not affect dimerization. Does not affect dipeptidase activity." evidence="10">
    <original>C</original>
    <variation>G</variation>
    <location>
        <position position="170"/>
    </location>
</feature>
<feature type="mutagenesis site" description="Complete abolition of dipeptidase activity. Does not affect cell membrane localization." evidence="9">
    <original>H</original>
    <variation>R</variation>
    <variation>K</variation>
    <variation>L</variation>
    <location>
        <position position="235"/>
    </location>
</feature>
<feature type="mutagenesis site" description="Does not affect dimerization. Does not affect dipeptidase activity." evidence="10">
    <original>C</original>
    <variation>A</variation>
    <location>
        <position position="242"/>
    </location>
</feature>
<feature type="mutagenesis site" description="Does not affect dimerization. Does not affect dipeptidase activity." evidence="10">
    <original>C</original>
    <variation>G</variation>
    <location>
        <position position="274"/>
    </location>
</feature>
<feature type="mutagenesis site" description="Does not affect dipeptidase activity." evidence="9">
    <original>D</original>
    <variation>A</variation>
    <location>
        <position position="285"/>
    </location>
</feature>
<feature type="mutagenesis site" description="Does not affect dipeptidase activity." evidence="9">
    <original>H</original>
    <variation>L</variation>
    <variation>Q</variation>
    <variation>K</variation>
    <location>
        <position position="286"/>
    </location>
</feature>
<feature type="mutagenesis site" description="Does not affect dipeptidase activity." evidence="9">
    <original>D</original>
    <variation>A</variation>
    <location>
        <position position="288"/>
    </location>
</feature>
<feature type="mutagenesis site" description="Does not affect dipeptidase activity." evidence="9">
    <original>H</original>
    <variation>R</variation>
    <location>
        <position position="289"/>
    </location>
</feature>
<feature type="mutagenesis site" description="Abolished disulfide-linked dimerization. Does not affect dipeptidase activity." evidence="10">
    <original>C</original>
    <variation>G</variation>
    <location>
        <position position="377"/>
    </location>
</feature>
<organism>
    <name type="scientific">Sus scrofa</name>
    <name type="common">Pig</name>
    <dbReference type="NCBI Taxonomy" id="9823"/>
    <lineage>
        <taxon>Eukaryota</taxon>
        <taxon>Metazoa</taxon>
        <taxon>Chordata</taxon>
        <taxon>Craniata</taxon>
        <taxon>Vertebrata</taxon>
        <taxon>Euteleostomi</taxon>
        <taxon>Mammalia</taxon>
        <taxon>Eutheria</taxon>
        <taxon>Laurasiatheria</taxon>
        <taxon>Artiodactyla</taxon>
        <taxon>Suina</taxon>
        <taxon>Suidae</taxon>
        <taxon>Sus</taxon>
    </lineage>
</organism>
<accession>P22412</accession>
<proteinExistence type="evidence at protein level"/>
<comment type="function">
    <text evidence="2 9 10">Hydrolyzes a wide range of dipeptides (PubMed:8045301, PubMed:8823187). Hydrolyzes the conversion of leukotriene D4 to leukotriene E4. Hydrolyzes cystinyl-bis-glycine (cys-bis-gly) formed during glutathione degradation. Also possesses beta lactamase activity and hydrolytically inactivates beta-lactam antibiotics (By similarity).</text>
</comment>
<comment type="function">
    <text evidence="2">Independently of its dipeptidase activity, acts as an adhesion receptor for neutrophil recruitment from bloodstream into inflamed lungs and liver.</text>
</comment>
<comment type="catalytic activity">
    <reaction evidence="5 9 10">
        <text>an L-aminoacyl-L-amino acid + H2O = 2 an L-alpha-amino acid</text>
        <dbReference type="Rhea" id="RHEA:48940"/>
        <dbReference type="ChEBI" id="CHEBI:15377"/>
        <dbReference type="ChEBI" id="CHEBI:59869"/>
        <dbReference type="ChEBI" id="CHEBI:77460"/>
        <dbReference type="EC" id="3.4.13.19"/>
    </reaction>
</comment>
<comment type="catalytic activity">
    <reaction evidence="2">
        <text>leukotriene D4 + H2O = leukotriene E4 + glycine</text>
        <dbReference type="Rhea" id="RHEA:48616"/>
        <dbReference type="ChEBI" id="CHEBI:15377"/>
        <dbReference type="ChEBI" id="CHEBI:57305"/>
        <dbReference type="ChEBI" id="CHEBI:57462"/>
        <dbReference type="ChEBI" id="CHEBI:63166"/>
    </reaction>
</comment>
<comment type="catalytic activity">
    <reaction evidence="2">
        <text>L-cystine-bis-glycine + 2 H2O = L-cystine + 2 glycine</text>
        <dbReference type="Rhea" id="RHEA:60520"/>
        <dbReference type="ChEBI" id="CHEBI:15377"/>
        <dbReference type="ChEBI" id="CHEBI:35491"/>
        <dbReference type="ChEBI" id="CHEBI:57305"/>
        <dbReference type="ChEBI" id="CHEBI:143812"/>
    </reaction>
</comment>
<comment type="catalytic activity">
    <reaction evidence="2">
        <text>a beta-lactam + H2O = a substituted beta-amino acid</text>
        <dbReference type="Rhea" id="RHEA:20401"/>
        <dbReference type="ChEBI" id="CHEBI:15377"/>
        <dbReference type="ChEBI" id="CHEBI:35627"/>
        <dbReference type="ChEBI" id="CHEBI:140347"/>
        <dbReference type="EC" id="3.5.2.6"/>
    </reaction>
</comment>
<comment type="catalytic activity">
    <reaction evidence="9 10">
        <text>glycyldehydrophenylalanine + H2O = 2,3-didehydrophenylalanine + glycine</text>
        <dbReference type="Rhea" id="RHEA:62704"/>
        <dbReference type="ChEBI" id="CHEBI:15377"/>
        <dbReference type="ChEBI" id="CHEBI:57305"/>
        <dbReference type="ChEBI" id="CHEBI:145925"/>
        <dbReference type="ChEBI" id="CHEBI:145926"/>
    </reaction>
</comment>
<comment type="cofactor">
    <cofactor evidence="1 5">
        <name>Zn(2+)</name>
        <dbReference type="ChEBI" id="CHEBI:29105"/>
    </cofactor>
</comment>
<comment type="activity regulation">
    <text evidence="1 9 10">Inhibited by L-penicillamine (By similarity). Inhibited by cilastatin (PubMed:8045301, PubMed:8823187).</text>
</comment>
<comment type="subunit">
    <text evidence="10">Homodimer; disulfide-linked.</text>
</comment>
<comment type="subcellular location">
    <subcellularLocation>
        <location>Apical cell membrane</location>
        <topology evidence="6">Lipid-anchor</topology>
        <topology evidence="6">GPI-anchor</topology>
    </subcellularLocation>
    <subcellularLocation>
        <location>Cell projection</location>
        <location>Microvillus membrane</location>
        <topology evidence="6">Lipid-anchor</topology>
        <topology evidence="6">GPI-anchor</topology>
    </subcellularLocation>
    <subcellularLocation>
        <location evidence="9">Cell membrane</location>
        <topology evidence="9">Lipid-anchor</topology>
        <topology evidence="9">GPI-anchor</topology>
    </subcellularLocation>
    <text evidence="3">Brush border membrane.</text>
</comment>
<comment type="similarity">
    <text evidence="5">Belongs to the metallo-dependent hydrolases superfamily. Peptidase M19 family.</text>
</comment>
<reference key="1">
    <citation type="journal article" date="1990" name="Biochem. J.">
        <title>cDNA cloning and expression in Xenopus laevis oocytes of pig renal dipeptidase, a glycosyl-phosphatidylinositol-anchored ectoenzyme.</title>
        <authorList>
            <person name="Rached E."/>
            <person name="Hooper N.M."/>
            <person name="James P."/>
            <person name="Semenza G."/>
            <person name="Turner A.J."/>
            <person name="Mantei N."/>
        </authorList>
    </citation>
    <scope>NUCLEOTIDE SEQUENCE [MRNA]</scope>
    <scope>PARTIAL PROTEIN SEQUENCE</scope>
    <scope>GLYCOSYLATION AT ASN-57</scope>
    <source>
        <tissue>Kidney cortex</tissue>
    </source>
</reference>
<reference key="2">
    <citation type="submission" date="1992-09" db="EMBL/GenBank/DDBJ databases">
        <title>Purification and cDNA cloning for porcine renal dipeptidase.</title>
        <authorList>
            <person name="Satoh S."/>
            <person name="Koyama S."/>
            <person name="Ohtuka K."/>
            <person name="Keida Y."/>
            <person name="Niwa M."/>
            <person name="Kohsaka M."/>
        </authorList>
    </citation>
    <scope>NUCLEOTIDE SEQUENCE [MRNA]</scope>
</reference>
<reference key="3">
    <citation type="journal article" date="1990" name="Biochem. J.">
        <title>Characterization of the glycosyl-phosphatidylinositol-anchored human renal dipeptidase reveals that it is more extensively glycosylated than the pig enzyme.</title>
        <authorList>
            <person name="Hooper N.M."/>
            <person name="Keen J.N."/>
            <person name="Turner A.J."/>
        </authorList>
    </citation>
    <scope>PROTEIN SEQUENCE OF 17-39</scope>
</reference>
<reference key="4">
    <citation type="journal article" date="1994" name="FEBS Lett.">
        <title>Directed mutagenesis of pig renal membrane dipeptidase. His219 is critical but the DHXXH motif is not essential for zinc binding or catalytic activity.</title>
        <authorList>
            <person name="Keynan S."/>
            <person name="Hooper N.M."/>
            <person name="Turner A.J."/>
        </authorList>
    </citation>
    <scope>CATALYTIC ACTIVITY</scope>
    <scope>MUTAGENESIS OF HIS-235; ASP-285; HIS-286; ASP-288 AND HIS-289</scope>
    <scope>SUBCELLULAR LOCATION</scope>
    <scope>FUNCTION</scope>
    <scope>ACTIVITY REGULATION</scope>
</reference>
<reference key="5">
    <citation type="journal article" date="1996" name="Biochemistry">
        <title>Site-directed mutagenesis of conserved cysteine residues in porcine membrane dipeptidase. Cys-361 alone is involved in disulfide-linked dimerization.</title>
        <authorList>
            <person name="Keynan S."/>
            <person name="Habgood N.T."/>
            <person name="Hooper N.M."/>
            <person name="Turner A.J."/>
        </authorList>
    </citation>
    <scope>INTERCHAIN DISULFIDE BOND</scope>
    <scope>MUTAGENESIS OF CYS-87; CYS-109; CYS-170; CYS-242; CYS-274 AND CYS-377</scope>
    <scope>CATALYTIC ACTIVITY</scope>
    <scope>SUBUNIT</scope>
    <scope>ACTIVITY REGULATION</scope>
</reference>
<reference key="6">
    <citation type="journal article" date="2006" name="Anal. Chem.">
        <title>Isolation and characterization of glycosylphosphatidylinositol-anchored peptides by hydrophilic interaction chromatography and MALDI tandem mass spectrometry.</title>
        <authorList>
            <person name="Omaetxebarria M.J."/>
            <person name="Hagglund P."/>
            <person name="Elortza F."/>
            <person name="Hooper N.M."/>
            <person name="Arizmendi J.M."/>
            <person name="Jensen O.N."/>
        </authorList>
    </citation>
    <scope>GPI-ANCHOR AT SER-384</scope>
    <scope>IDENTIFICATION BY MASS SPECTROMETRY</scope>
</reference>
<protein>
    <recommendedName>
        <fullName>Dipeptidase 1</fullName>
        <ecNumber evidence="9 10">3.4.13.19</ecNumber>
    </recommendedName>
    <alternativeName>
        <fullName evidence="11">Beta-lactamase</fullName>
        <ecNumber evidence="2">3.5.2.6</ecNumber>
    </alternativeName>
    <alternativeName>
        <fullName>Microsomal dipeptidase</fullName>
    </alternativeName>
    <alternativeName>
        <fullName>Renal dipeptidase</fullName>
    </alternativeName>
</protein>
<keyword id="KW-1003">Cell membrane</keyword>
<keyword id="KW-0966">Cell projection</keyword>
<keyword id="KW-0224">Dipeptidase</keyword>
<keyword id="KW-0903">Direct protein sequencing</keyword>
<keyword id="KW-1015">Disulfide bond</keyword>
<keyword id="KW-0325">Glycoprotein</keyword>
<keyword id="KW-0336">GPI-anchor</keyword>
<keyword id="KW-0378">Hydrolase</keyword>
<keyword id="KW-0443">Lipid metabolism</keyword>
<keyword id="KW-0449">Lipoprotein</keyword>
<keyword id="KW-0472">Membrane</keyword>
<keyword id="KW-0479">Metal-binding</keyword>
<keyword id="KW-0482">Metalloprotease</keyword>
<keyword id="KW-0645">Protease</keyword>
<keyword id="KW-1185">Reference proteome</keyword>
<keyword id="KW-0732">Signal</keyword>
<keyword id="KW-0862">Zinc</keyword>
<evidence type="ECO:0000250" key="1">
    <source>
        <dbReference type="UniProtKB" id="P16444"/>
    </source>
</evidence>
<evidence type="ECO:0000250" key="2">
    <source>
        <dbReference type="UniProtKB" id="P31428"/>
    </source>
</evidence>
<evidence type="ECO:0000250" key="3">
    <source>
        <dbReference type="UniProtKB" id="P31429"/>
    </source>
</evidence>
<evidence type="ECO:0000255" key="4"/>
<evidence type="ECO:0000255" key="5">
    <source>
        <dbReference type="PROSITE-ProRule" id="PRU10073"/>
    </source>
</evidence>
<evidence type="ECO:0000269" key="6">
    <source>
    </source>
</evidence>
<evidence type="ECO:0000269" key="7">
    <source>
    </source>
</evidence>
<evidence type="ECO:0000269" key="8">
    <source>
    </source>
</evidence>
<evidence type="ECO:0000269" key="9">
    <source>
    </source>
</evidence>
<evidence type="ECO:0000269" key="10">
    <source>
    </source>
</evidence>
<evidence type="ECO:0000305" key="11"/>
<gene>
    <name type="primary">DPEP1</name>
    <name type="synonym">RDP</name>
</gene>
<name>DPEP1_PIG</name>
<dbReference type="EC" id="3.4.13.19" evidence="9 10"/>
<dbReference type="EC" id="3.5.2.6" evidence="2"/>
<dbReference type="EMBL" id="X53730">
    <property type="protein sequence ID" value="CAA37762.1"/>
    <property type="molecule type" value="mRNA"/>
</dbReference>
<dbReference type="EMBL" id="D13142">
    <property type="protein sequence ID" value="BAA02433.1"/>
    <property type="molecule type" value="mRNA"/>
</dbReference>
<dbReference type="PIR" id="JS0759">
    <property type="entry name" value="JS0759"/>
</dbReference>
<dbReference type="RefSeq" id="NP_999273.1">
    <property type="nucleotide sequence ID" value="NM_214108.1"/>
</dbReference>
<dbReference type="SMR" id="P22412"/>
<dbReference type="FunCoup" id="P22412">
    <property type="interactions" value="27"/>
</dbReference>
<dbReference type="STRING" id="9823.ENSSSCP00000019823"/>
<dbReference type="BindingDB" id="P22412"/>
<dbReference type="ChEMBL" id="CHEMBL2626"/>
<dbReference type="DrugCentral" id="P22412"/>
<dbReference type="MEROPS" id="M19.001"/>
<dbReference type="GlyCosmos" id="P22412">
    <property type="glycosylation" value="2 sites, No reported glycans"/>
</dbReference>
<dbReference type="GlyGen" id="P22412">
    <property type="glycosylation" value="2 sites"/>
</dbReference>
<dbReference type="iPTMnet" id="P22412"/>
<dbReference type="PaxDb" id="9823-ENSSSCP00000019823"/>
<dbReference type="PeptideAtlas" id="P22412"/>
<dbReference type="Ensembl" id="ENSSSCT00025034816.1">
    <property type="protein sequence ID" value="ENSSSCP00025014499.1"/>
    <property type="gene ID" value="ENSSSCG00025025766.1"/>
</dbReference>
<dbReference type="Ensembl" id="ENSSSCT00035005011.1">
    <property type="protein sequence ID" value="ENSSSCP00035001713.1"/>
    <property type="gene ID" value="ENSSSCG00035004024.1"/>
</dbReference>
<dbReference type="Ensembl" id="ENSSSCT00045014623.1">
    <property type="protein sequence ID" value="ENSSSCP00045010144.1"/>
    <property type="gene ID" value="ENSSSCG00045008656.1"/>
</dbReference>
<dbReference type="Ensembl" id="ENSSSCT00065097843.1">
    <property type="protein sequence ID" value="ENSSSCP00065042890.1"/>
    <property type="gene ID" value="ENSSSCG00065071207.1"/>
</dbReference>
<dbReference type="Ensembl" id="ENSSSCT00105046185">
    <property type="protein sequence ID" value="ENSSSCP00105032155"/>
    <property type="gene ID" value="ENSSSCG00105024433"/>
</dbReference>
<dbReference type="Ensembl" id="ENSSSCT00110068973">
    <property type="protein sequence ID" value="ENSSSCP00110048580"/>
    <property type="gene ID" value="ENSSSCG00110036273"/>
</dbReference>
<dbReference type="Ensembl" id="ENSSSCT00115032502">
    <property type="protein sequence ID" value="ENSSSCP00115030885"/>
    <property type="gene ID" value="ENSSSCG00115018354"/>
</dbReference>
<dbReference type="GeneID" id="397196"/>
<dbReference type="KEGG" id="ssc:397196"/>
<dbReference type="CTD" id="1800"/>
<dbReference type="eggNOG" id="KOG4127">
    <property type="taxonomic scope" value="Eukaryota"/>
</dbReference>
<dbReference type="InParanoid" id="P22412"/>
<dbReference type="OrthoDB" id="445695at2759"/>
<dbReference type="BioCyc" id="MetaCyc:MONOMER-9981"/>
<dbReference type="Reactome" id="R-SSC-2142691">
    <property type="pathway name" value="Synthesis of Leukotrienes (LT) and Eoxins (EX)"/>
</dbReference>
<dbReference type="Reactome" id="R-SSC-5423646">
    <property type="pathway name" value="Aflatoxin activation and detoxification"/>
</dbReference>
<dbReference type="PRO" id="PR:P22412"/>
<dbReference type="Proteomes" id="UP000008227">
    <property type="component" value="Unplaced"/>
</dbReference>
<dbReference type="Proteomes" id="UP000314985">
    <property type="component" value="Unplaced"/>
</dbReference>
<dbReference type="Proteomes" id="UP000694570">
    <property type="component" value="Unplaced"/>
</dbReference>
<dbReference type="Proteomes" id="UP000694571">
    <property type="component" value="Unplaced"/>
</dbReference>
<dbReference type="Proteomes" id="UP000694720">
    <property type="component" value="Unplaced"/>
</dbReference>
<dbReference type="Proteomes" id="UP000694722">
    <property type="component" value="Unplaced"/>
</dbReference>
<dbReference type="Proteomes" id="UP000694723">
    <property type="component" value="Unplaced"/>
</dbReference>
<dbReference type="Proteomes" id="UP000694724">
    <property type="component" value="Unplaced"/>
</dbReference>
<dbReference type="Proteomes" id="UP000694725">
    <property type="component" value="Unplaced"/>
</dbReference>
<dbReference type="Proteomes" id="UP000694726">
    <property type="component" value="Unplaced"/>
</dbReference>
<dbReference type="Proteomes" id="UP000694727">
    <property type="component" value="Unplaced"/>
</dbReference>
<dbReference type="Proteomes" id="UP000694728">
    <property type="component" value="Unplaced"/>
</dbReference>
<dbReference type="GO" id="GO:0045177">
    <property type="term" value="C:apical part of cell"/>
    <property type="evidence" value="ECO:0000250"/>
    <property type="project" value="UniProtKB"/>
</dbReference>
<dbReference type="GO" id="GO:0016324">
    <property type="term" value="C:apical plasma membrane"/>
    <property type="evidence" value="ECO:0007669"/>
    <property type="project" value="UniProtKB-SubCell"/>
</dbReference>
<dbReference type="GO" id="GO:0005789">
    <property type="term" value="C:endoplasmic reticulum membrane"/>
    <property type="evidence" value="ECO:0000314"/>
    <property type="project" value="UniProtKB"/>
</dbReference>
<dbReference type="GO" id="GO:0005615">
    <property type="term" value="C:extracellular space"/>
    <property type="evidence" value="ECO:0000314"/>
    <property type="project" value="UniProtKB"/>
</dbReference>
<dbReference type="GO" id="GO:0031528">
    <property type="term" value="C:microvillus membrane"/>
    <property type="evidence" value="ECO:0007669"/>
    <property type="project" value="UniProtKB-SubCell"/>
</dbReference>
<dbReference type="GO" id="GO:0005886">
    <property type="term" value="C:plasma membrane"/>
    <property type="evidence" value="ECO:0000314"/>
    <property type="project" value="UniProtKB"/>
</dbReference>
<dbReference type="GO" id="GO:0098552">
    <property type="term" value="C:side of membrane"/>
    <property type="evidence" value="ECO:0007669"/>
    <property type="project" value="UniProtKB-KW"/>
</dbReference>
<dbReference type="GO" id="GO:0008800">
    <property type="term" value="F:beta-lactamase activity"/>
    <property type="evidence" value="ECO:0000250"/>
    <property type="project" value="UniProtKB"/>
</dbReference>
<dbReference type="GO" id="GO:0016805">
    <property type="term" value="F:dipeptidase activity"/>
    <property type="evidence" value="ECO:0000314"/>
    <property type="project" value="UniProtKB"/>
</dbReference>
<dbReference type="GO" id="GO:0034235">
    <property type="term" value="F:GPI anchor binding"/>
    <property type="evidence" value="ECO:0000314"/>
    <property type="project" value="UniProtKB"/>
</dbReference>
<dbReference type="GO" id="GO:0042802">
    <property type="term" value="F:identical protein binding"/>
    <property type="evidence" value="ECO:0000314"/>
    <property type="project" value="UniProtKB"/>
</dbReference>
<dbReference type="GO" id="GO:0070573">
    <property type="term" value="F:metallodipeptidase activity"/>
    <property type="evidence" value="ECO:0000250"/>
    <property type="project" value="UniProtKB"/>
</dbReference>
<dbReference type="GO" id="GO:0072341">
    <property type="term" value="F:modified amino acid binding"/>
    <property type="evidence" value="ECO:0000250"/>
    <property type="project" value="UniProtKB"/>
</dbReference>
<dbReference type="GO" id="GO:0008270">
    <property type="term" value="F:zinc ion binding"/>
    <property type="evidence" value="ECO:0000250"/>
    <property type="project" value="UniProtKB"/>
</dbReference>
<dbReference type="GO" id="GO:0016999">
    <property type="term" value="P:antibiotic metabolic process"/>
    <property type="evidence" value="ECO:0000250"/>
    <property type="project" value="UniProtKB"/>
</dbReference>
<dbReference type="GO" id="GO:0071277">
    <property type="term" value="P:cellular response to calcium ion"/>
    <property type="evidence" value="ECO:0000314"/>
    <property type="project" value="UniProtKB"/>
</dbReference>
<dbReference type="GO" id="GO:0032869">
    <property type="term" value="P:cellular response to insulin stimulus"/>
    <property type="evidence" value="ECO:0000314"/>
    <property type="project" value="UniProtKB"/>
</dbReference>
<dbReference type="GO" id="GO:0071732">
    <property type="term" value="P:cellular response to nitric oxide"/>
    <property type="evidence" value="ECO:0000314"/>
    <property type="project" value="UniProtKB"/>
</dbReference>
<dbReference type="GO" id="GO:0006751">
    <property type="term" value="P:glutathione catabolic process"/>
    <property type="evidence" value="ECO:0000250"/>
    <property type="project" value="UniProtKB"/>
</dbReference>
<dbReference type="GO" id="GO:0050667">
    <property type="term" value="P:homocysteine metabolic process"/>
    <property type="evidence" value="ECO:0000250"/>
    <property type="project" value="UniProtKB"/>
</dbReference>
<dbReference type="GO" id="GO:1901749">
    <property type="term" value="P:leukotriene D4 catabolic process"/>
    <property type="evidence" value="ECO:0000250"/>
    <property type="project" value="UniProtKB"/>
</dbReference>
<dbReference type="GO" id="GO:0006691">
    <property type="term" value="P:leukotriene metabolic process"/>
    <property type="evidence" value="ECO:0000250"/>
    <property type="project" value="UniProtKB"/>
</dbReference>
<dbReference type="GO" id="GO:0030336">
    <property type="term" value="P:negative regulation of cell migration"/>
    <property type="evidence" value="ECO:0000250"/>
    <property type="project" value="UniProtKB"/>
</dbReference>
<dbReference type="GO" id="GO:0006508">
    <property type="term" value="P:proteolysis"/>
    <property type="evidence" value="ECO:0007669"/>
    <property type="project" value="UniProtKB-KW"/>
</dbReference>
<dbReference type="CDD" id="cd01301">
    <property type="entry name" value="rDP_like"/>
    <property type="match status" value="1"/>
</dbReference>
<dbReference type="FunFam" id="3.20.20.140:FF:000030">
    <property type="entry name" value="Dipeptidase"/>
    <property type="match status" value="1"/>
</dbReference>
<dbReference type="Gene3D" id="3.20.20.140">
    <property type="entry name" value="Metal-dependent hydrolases"/>
    <property type="match status" value="1"/>
</dbReference>
<dbReference type="InterPro" id="IPR000180">
    <property type="entry name" value="Dipep_AS"/>
</dbReference>
<dbReference type="InterPro" id="IPR032466">
    <property type="entry name" value="Metal_Hydrolase"/>
</dbReference>
<dbReference type="InterPro" id="IPR008257">
    <property type="entry name" value="Pept_M19"/>
</dbReference>
<dbReference type="PANTHER" id="PTHR10443:SF38">
    <property type="entry name" value="DIPEPTIDASE 1"/>
    <property type="match status" value="1"/>
</dbReference>
<dbReference type="PANTHER" id="PTHR10443">
    <property type="entry name" value="MICROSOMAL DIPEPTIDASE"/>
    <property type="match status" value="1"/>
</dbReference>
<dbReference type="Pfam" id="PF01244">
    <property type="entry name" value="Peptidase_M19"/>
    <property type="match status" value="1"/>
</dbReference>
<dbReference type="SUPFAM" id="SSF51556">
    <property type="entry name" value="Metallo-dependent hydrolases"/>
    <property type="match status" value="1"/>
</dbReference>
<dbReference type="PROSITE" id="PS00869">
    <property type="entry name" value="RENAL_DIPEPTIDASE_1"/>
    <property type="match status" value="1"/>
</dbReference>
<dbReference type="PROSITE" id="PS51365">
    <property type="entry name" value="RENAL_DIPEPTIDASE_2"/>
    <property type="match status" value="1"/>
</dbReference>
<sequence>MWTSWWLWPLVAVCAADQFRDLAVRIMQDTPVIDGHNDLPWQLLNLFNNQLQDPGANLSSLAHTHTNIPKLKAGFVGGQFWSAYVPCDTQNRDAVKRTLEQIDVIQRMCQAYPETFACVTSSTGIRQAFREGKVASLVGVEGGHSIDSSLGVLRALYHLGMRYMTLTHSCNTPWADNWLVDTGDDKAQSQGLSHFGQSVVKEMNRLGVMIDLAHVSVATMRAALKLSQAPVIFSHSSAYSLCPHRRNVPDDVLQLVKETGSLVMVNFYNDYVSCSAKANLSQVADHLDHIKKVAGAAAVGFGGDYDGVSRVPSGLEDVSKYPDLVAELLRRQWTEAEVRGALADNLLRVFEAVEQASNHAQVPGEEPIPLGQLEASCRTNYGYSAAPSLHLPPGSLLASLVPLLLLSLP</sequence>